<name>NRDR_DESPS</name>
<gene>
    <name evidence="1" type="primary">nrdR</name>
    <name type="ordered locus">DP2786</name>
</gene>
<protein>
    <recommendedName>
        <fullName evidence="1">Transcriptional repressor NrdR</fullName>
    </recommendedName>
</protein>
<keyword id="KW-0067">ATP-binding</keyword>
<keyword id="KW-0238">DNA-binding</keyword>
<keyword id="KW-0479">Metal-binding</keyword>
<keyword id="KW-0547">Nucleotide-binding</keyword>
<keyword id="KW-1185">Reference proteome</keyword>
<keyword id="KW-0678">Repressor</keyword>
<keyword id="KW-0804">Transcription</keyword>
<keyword id="KW-0805">Transcription regulation</keyword>
<keyword id="KW-0862">Zinc</keyword>
<keyword id="KW-0863">Zinc-finger</keyword>
<reference key="1">
    <citation type="journal article" date="2004" name="Environ. Microbiol.">
        <title>The genome of Desulfotalea psychrophila, a sulfate-reducing bacterium from permanently cold Arctic sediments.</title>
        <authorList>
            <person name="Rabus R."/>
            <person name="Ruepp A."/>
            <person name="Frickey T."/>
            <person name="Rattei T."/>
            <person name="Fartmann B."/>
            <person name="Stark M."/>
            <person name="Bauer M."/>
            <person name="Zibat A."/>
            <person name="Lombardot T."/>
            <person name="Becker I."/>
            <person name="Amann J."/>
            <person name="Gellner K."/>
            <person name="Teeling H."/>
            <person name="Leuschner W.D."/>
            <person name="Gloeckner F.-O."/>
            <person name="Lupas A.N."/>
            <person name="Amann R."/>
            <person name="Klenk H.-P."/>
        </authorList>
    </citation>
    <scope>NUCLEOTIDE SEQUENCE [LARGE SCALE GENOMIC DNA]</scope>
    <source>
        <strain>DSM 12343 / LSv54</strain>
    </source>
</reference>
<dbReference type="EMBL" id="CR522870">
    <property type="protein sequence ID" value="CAG37515.1"/>
    <property type="molecule type" value="Genomic_DNA"/>
</dbReference>
<dbReference type="RefSeq" id="WP_011190027.1">
    <property type="nucleotide sequence ID" value="NC_006138.1"/>
</dbReference>
<dbReference type="SMR" id="Q6AJG5"/>
<dbReference type="STRING" id="177439.DP2786"/>
<dbReference type="KEGG" id="dps:DP2786"/>
<dbReference type="eggNOG" id="COG1327">
    <property type="taxonomic scope" value="Bacteria"/>
</dbReference>
<dbReference type="HOGENOM" id="CLU_108412_0_0_7"/>
<dbReference type="OrthoDB" id="9807461at2"/>
<dbReference type="Proteomes" id="UP000000602">
    <property type="component" value="Chromosome"/>
</dbReference>
<dbReference type="GO" id="GO:0005524">
    <property type="term" value="F:ATP binding"/>
    <property type="evidence" value="ECO:0007669"/>
    <property type="project" value="UniProtKB-KW"/>
</dbReference>
<dbReference type="GO" id="GO:0003677">
    <property type="term" value="F:DNA binding"/>
    <property type="evidence" value="ECO:0007669"/>
    <property type="project" value="UniProtKB-KW"/>
</dbReference>
<dbReference type="GO" id="GO:0008270">
    <property type="term" value="F:zinc ion binding"/>
    <property type="evidence" value="ECO:0007669"/>
    <property type="project" value="UniProtKB-UniRule"/>
</dbReference>
<dbReference type="GO" id="GO:0045892">
    <property type="term" value="P:negative regulation of DNA-templated transcription"/>
    <property type="evidence" value="ECO:0007669"/>
    <property type="project" value="UniProtKB-UniRule"/>
</dbReference>
<dbReference type="HAMAP" id="MF_00440">
    <property type="entry name" value="NrdR"/>
    <property type="match status" value="1"/>
</dbReference>
<dbReference type="InterPro" id="IPR005144">
    <property type="entry name" value="ATP-cone_dom"/>
</dbReference>
<dbReference type="InterPro" id="IPR055173">
    <property type="entry name" value="NrdR-like_N"/>
</dbReference>
<dbReference type="InterPro" id="IPR003796">
    <property type="entry name" value="RNR_NrdR-like"/>
</dbReference>
<dbReference type="NCBIfam" id="TIGR00244">
    <property type="entry name" value="transcriptional regulator NrdR"/>
    <property type="match status" value="1"/>
</dbReference>
<dbReference type="PANTHER" id="PTHR30455">
    <property type="entry name" value="TRANSCRIPTIONAL REPRESSOR NRDR"/>
    <property type="match status" value="1"/>
</dbReference>
<dbReference type="PANTHER" id="PTHR30455:SF2">
    <property type="entry name" value="TRANSCRIPTIONAL REPRESSOR NRDR"/>
    <property type="match status" value="1"/>
</dbReference>
<dbReference type="Pfam" id="PF03477">
    <property type="entry name" value="ATP-cone"/>
    <property type="match status" value="1"/>
</dbReference>
<dbReference type="Pfam" id="PF22811">
    <property type="entry name" value="Zn_ribbon_NrdR"/>
    <property type="match status" value="1"/>
</dbReference>
<dbReference type="PROSITE" id="PS51161">
    <property type="entry name" value="ATP_CONE"/>
    <property type="match status" value="1"/>
</dbReference>
<organism>
    <name type="scientific">Desulfotalea psychrophila (strain LSv54 / DSM 12343)</name>
    <dbReference type="NCBI Taxonomy" id="177439"/>
    <lineage>
        <taxon>Bacteria</taxon>
        <taxon>Pseudomonadati</taxon>
        <taxon>Thermodesulfobacteriota</taxon>
        <taxon>Desulfobulbia</taxon>
        <taxon>Desulfobulbales</taxon>
        <taxon>Desulfocapsaceae</taxon>
        <taxon>Desulfotalea</taxon>
    </lineage>
</organism>
<comment type="function">
    <text evidence="1">Negatively regulates transcription of bacterial ribonucleotide reductase nrd genes and operons by binding to NrdR-boxes.</text>
</comment>
<comment type="cofactor">
    <cofactor evidence="1">
        <name>Zn(2+)</name>
        <dbReference type="ChEBI" id="CHEBI:29105"/>
    </cofactor>
    <text evidence="1">Binds 1 zinc ion.</text>
</comment>
<comment type="similarity">
    <text evidence="1">Belongs to the NrdR family.</text>
</comment>
<proteinExistence type="inferred from homology"/>
<sequence length="156" mass="18201">MKCPYCGHLDNKVIDSRINKDATITRRRRSCLACDQRFTTYERLEVMFPMLVKKDGRREAWDRHKLVVGIEKACEKRAVSRDKIDEFVDDIEHMLQDYGAKEISSSIVGEWVMERLPALDEVAYVRFASVYRQFKDVDEFMSELKNLLDARGGGDD</sequence>
<feature type="chain" id="PRO_0000182293" description="Transcriptional repressor NrdR">
    <location>
        <begin position="1"/>
        <end position="156"/>
    </location>
</feature>
<feature type="domain" description="ATP-cone" evidence="1">
    <location>
        <begin position="49"/>
        <end position="139"/>
    </location>
</feature>
<feature type="zinc finger region" evidence="1">
    <location>
        <begin position="3"/>
        <end position="34"/>
    </location>
</feature>
<evidence type="ECO:0000255" key="1">
    <source>
        <dbReference type="HAMAP-Rule" id="MF_00440"/>
    </source>
</evidence>
<accession>Q6AJG5</accession>